<keyword id="KW-0028">Amino-acid biosynthesis</keyword>
<keyword id="KW-0057">Aromatic amino acid biosynthesis</keyword>
<keyword id="KW-0170">Cobalt</keyword>
<keyword id="KW-0963">Cytoplasm</keyword>
<keyword id="KW-0456">Lyase</keyword>
<keyword id="KW-0479">Metal-binding</keyword>
<keyword id="KW-0520">NAD</keyword>
<keyword id="KW-0547">Nucleotide-binding</keyword>
<keyword id="KW-0862">Zinc</keyword>
<feature type="chain" id="PRO_1000094615" description="3-dehydroquinate synthase">
    <location>
        <begin position="1"/>
        <end position="359"/>
    </location>
</feature>
<feature type="binding site" evidence="1">
    <location>
        <begin position="71"/>
        <end position="76"/>
    </location>
    <ligand>
        <name>NAD(+)</name>
        <dbReference type="ChEBI" id="CHEBI:57540"/>
    </ligand>
</feature>
<feature type="binding site" evidence="1">
    <location>
        <begin position="105"/>
        <end position="109"/>
    </location>
    <ligand>
        <name>NAD(+)</name>
        <dbReference type="ChEBI" id="CHEBI:57540"/>
    </ligand>
</feature>
<feature type="binding site" evidence="1">
    <location>
        <begin position="129"/>
        <end position="130"/>
    </location>
    <ligand>
        <name>NAD(+)</name>
        <dbReference type="ChEBI" id="CHEBI:57540"/>
    </ligand>
</feature>
<feature type="binding site" evidence="1">
    <location>
        <position position="142"/>
    </location>
    <ligand>
        <name>NAD(+)</name>
        <dbReference type="ChEBI" id="CHEBI:57540"/>
    </ligand>
</feature>
<feature type="binding site" evidence="1">
    <location>
        <position position="151"/>
    </location>
    <ligand>
        <name>NAD(+)</name>
        <dbReference type="ChEBI" id="CHEBI:57540"/>
    </ligand>
</feature>
<feature type="binding site" evidence="1">
    <location>
        <begin position="169"/>
        <end position="172"/>
    </location>
    <ligand>
        <name>NAD(+)</name>
        <dbReference type="ChEBI" id="CHEBI:57540"/>
    </ligand>
</feature>
<feature type="binding site" evidence="1">
    <location>
        <position position="184"/>
    </location>
    <ligand>
        <name>Zn(2+)</name>
        <dbReference type="ChEBI" id="CHEBI:29105"/>
    </ligand>
</feature>
<feature type="binding site" evidence="1">
    <location>
        <position position="247"/>
    </location>
    <ligand>
        <name>Zn(2+)</name>
        <dbReference type="ChEBI" id="CHEBI:29105"/>
    </ligand>
</feature>
<feature type="binding site" evidence="1">
    <location>
        <position position="264"/>
    </location>
    <ligand>
        <name>Zn(2+)</name>
        <dbReference type="ChEBI" id="CHEBI:29105"/>
    </ligand>
</feature>
<comment type="function">
    <text evidence="1">Catalyzes the conversion of 3-deoxy-D-arabino-heptulosonate 7-phosphate (DAHP) to dehydroquinate (DHQ).</text>
</comment>
<comment type="catalytic activity">
    <reaction evidence="1">
        <text>7-phospho-2-dehydro-3-deoxy-D-arabino-heptonate = 3-dehydroquinate + phosphate</text>
        <dbReference type="Rhea" id="RHEA:21968"/>
        <dbReference type="ChEBI" id="CHEBI:32364"/>
        <dbReference type="ChEBI" id="CHEBI:43474"/>
        <dbReference type="ChEBI" id="CHEBI:58394"/>
        <dbReference type="EC" id="4.2.3.4"/>
    </reaction>
</comment>
<comment type="cofactor">
    <cofactor evidence="1">
        <name>Co(2+)</name>
        <dbReference type="ChEBI" id="CHEBI:48828"/>
    </cofactor>
    <cofactor evidence="1">
        <name>Zn(2+)</name>
        <dbReference type="ChEBI" id="CHEBI:29105"/>
    </cofactor>
    <text evidence="1">Binds 1 divalent metal cation per subunit. Can use either Co(2+) or Zn(2+).</text>
</comment>
<comment type="cofactor">
    <cofactor evidence="1">
        <name>NAD(+)</name>
        <dbReference type="ChEBI" id="CHEBI:57540"/>
    </cofactor>
</comment>
<comment type="pathway">
    <text evidence="1">Metabolic intermediate biosynthesis; chorismate biosynthesis; chorismate from D-erythrose 4-phosphate and phosphoenolpyruvate: step 2/7.</text>
</comment>
<comment type="subcellular location">
    <subcellularLocation>
        <location evidence="1">Cytoplasm</location>
    </subcellularLocation>
</comment>
<comment type="similarity">
    <text evidence="1">Belongs to the sugar phosphate cyclases superfamily. Dehydroquinate synthase family.</text>
</comment>
<reference key="1">
    <citation type="submission" date="2006-09" db="EMBL/GenBank/DDBJ databases">
        <title>Complete sequence of chromosome 1 of Shewanella sp. ANA-3.</title>
        <authorList>
            <person name="Copeland A."/>
            <person name="Lucas S."/>
            <person name="Lapidus A."/>
            <person name="Barry K."/>
            <person name="Detter J.C."/>
            <person name="Glavina del Rio T."/>
            <person name="Hammon N."/>
            <person name="Israni S."/>
            <person name="Dalin E."/>
            <person name="Tice H."/>
            <person name="Pitluck S."/>
            <person name="Chertkov O."/>
            <person name="Brettin T."/>
            <person name="Bruce D."/>
            <person name="Han C."/>
            <person name="Tapia R."/>
            <person name="Gilna P."/>
            <person name="Schmutz J."/>
            <person name="Larimer F."/>
            <person name="Land M."/>
            <person name="Hauser L."/>
            <person name="Kyrpides N."/>
            <person name="Kim E."/>
            <person name="Newman D."/>
            <person name="Salticov C."/>
            <person name="Konstantinidis K."/>
            <person name="Klappenback J."/>
            <person name="Tiedje J."/>
            <person name="Richardson P."/>
        </authorList>
    </citation>
    <scope>NUCLEOTIDE SEQUENCE [LARGE SCALE GENOMIC DNA]</scope>
    <source>
        <strain>ANA-3</strain>
    </source>
</reference>
<name>AROB_SHESA</name>
<dbReference type="EC" id="4.2.3.4" evidence="1"/>
<dbReference type="EMBL" id="CP000469">
    <property type="protein sequence ID" value="ABK50111.1"/>
    <property type="molecule type" value="Genomic_DNA"/>
</dbReference>
<dbReference type="RefSeq" id="WP_011718622.1">
    <property type="nucleotide sequence ID" value="NC_008577.1"/>
</dbReference>
<dbReference type="SMR" id="A0L242"/>
<dbReference type="STRING" id="94122.Shewana3_3893"/>
<dbReference type="KEGG" id="shn:Shewana3_3893"/>
<dbReference type="eggNOG" id="COG0337">
    <property type="taxonomic scope" value="Bacteria"/>
</dbReference>
<dbReference type="HOGENOM" id="CLU_001201_0_2_6"/>
<dbReference type="OrthoDB" id="9806583at2"/>
<dbReference type="UniPathway" id="UPA00053">
    <property type="reaction ID" value="UER00085"/>
</dbReference>
<dbReference type="Proteomes" id="UP000002589">
    <property type="component" value="Chromosome"/>
</dbReference>
<dbReference type="GO" id="GO:0005737">
    <property type="term" value="C:cytoplasm"/>
    <property type="evidence" value="ECO:0007669"/>
    <property type="project" value="UniProtKB-SubCell"/>
</dbReference>
<dbReference type="GO" id="GO:0003856">
    <property type="term" value="F:3-dehydroquinate synthase activity"/>
    <property type="evidence" value="ECO:0007669"/>
    <property type="project" value="UniProtKB-UniRule"/>
</dbReference>
<dbReference type="GO" id="GO:0046872">
    <property type="term" value="F:metal ion binding"/>
    <property type="evidence" value="ECO:0007669"/>
    <property type="project" value="UniProtKB-KW"/>
</dbReference>
<dbReference type="GO" id="GO:0000166">
    <property type="term" value="F:nucleotide binding"/>
    <property type="evidence" value="ECO:0007669"/>
    <property type="project" value="UniProtKB-KW"/>
</dbReference>
<dbReference type="GO" id="GO:0008652">
    <property type="term" value="P:amino acid biosynthetic process"/>
    <property type="evidence" value="ECO:0007669"/>
    <property type="project" value="UniProtKB-KW"/>
</dbReference>
<dbReference type="GO" id="GO:0009073">
    <property type="term" value="P:aromatic amino acid family biosynthetic process"/>
    <property type="evidence" value="ECO:0007669"/>
    <property type="project" value="UniProtKB-KW"/>
</dbReference>
<dbReference type="GO" id="GO:0009423">
    <property type="term" value="P:chorismate biosynthetic process"/>
    <property type="evidence" value="ECO:0007669"/>
    <property type="project" value="UniProtKB-UniRule"/>
</dbReference>
<dbReference type="CDD" id="cd08195">
    <property type="entry name" value="DHQS"/>
    <property type="match status" value="1"/>
</dbReference>
<dbReference type="FunFam" id="1.20.1090.10:FF:000002">
    <property type="entry name" value="3-dehydroquinate synthase"/>
    <property type="match status" value="1"/>
</dbReference>
<dbReference type="FunFam" id="3.40.50.1970:FF:000001">
    <property type="entry name" value="3-dehydroquinate synthase"/>
    <property type="match status" value="1"/>
</dbReference>
<dbReference type="Gene3D" id="3.40.50.1970">
    <property type="match status" value="1"/>
</dbReference>
<dbReference type="Gene3D" id="1.20.1090.10">
    <property type="entry name" value="Dehydroquinate synthase-like - alpha domain"/>
    <property type="match status" value="1"/>
</dbReference>
<dbReference type="HAMAP" id="MF_00110">
    <property type="entry name" value="DHQ_synthase"/>
    <property type="match status" value="1"/>
</dbReference>
<dbReference type="InterPro" id="IPR050071">
    <property type="entry name" value="Dehydroquinate_synthase"/>
</dbReference>
<dbReference type="InterPro" id="IPR016037">
    <property type="entry name" value="DHQ_synth_AroB"/>
</dbReference>
<dbReference type="InterPro" id="IPR030963">
    <property type="entry name" value="DHQ_synth_fam"/>
</dbReference>
<dbReference type="InterPro" id="IPR030960">
    <property type="entry name" value="DHQS/DOIS_N"/>
</dbReference>
<dbReference type="InterPro" id="IPR056179">
    <property type="entry name" value="DHQS_C"/>
</dbReference>
<dbReference type="NCBIfam" id="TIGR01357">
    <property type="entry name" value="aroB"/>
    <property type="match status" value="1"/>
</dbReference>
<dbReference type="PANTHER" id="PTHR43622">
    <property type="entry name" value="3-DEHYDROQUINATE SYNTHASE"/>
    <property type="match status" value="1"/>
</dbReference>
<dbReference type="PANTHER" id="PTHR43622:SF7">
    <property type="entry name" value="3-DEHYDROQUINATE SYNTHASE, CHLOROPLASTIC"/>
    <property type="match status" value="1"/>
</dbReference>
<dbReference type="Pfam" id="PF01761">
    <property type="entry name" value="DHQ_synthase"/>
    <property type="match status" value="1"/>
</dbReference>
<dbReference type="Pfam" id="PF24621">
    <property type="entry name" value="DHQS_C"/>
    <property type="match status" value="1"/>
</dbReference>
<dbReference type="PIRSF" id="PIRSF001455">
    <property type="entry name" value="DHQ_synth"/>
    <property type="match status" value="1"/>
</dbReference>
<dbReference type="SUPFAM" id="SSF56796">
    <property type="entry name" value="Dehydroquinate synthase-like"/>
    <property type="match status" value="1"/>
</dbReference>
<protein>
    <recommendedName>
        <fullName evidence="1">3-dehydroquinate synthase</fullName>
        <shortName evidence="1">DHQS</shortName>
        <ecNumber evidence="1">4.2.3.4</ecNumber>
    </recommendedName>
</protein>
<evidence type="ECO:0000255" key="1">
    <source>
        <dbReference type="HAMAP-Rule" id="MF_00110"/>
    </source>
</evidence>
<organism>
    <name type="scientific">Shewanella sp. (strain ANA-3)</name>
    <dbReference type="NCBI Taxonomy" id="94122"/>
    <lineage>
        <taxon>Bacteria</taxon>
        <taxon>Pseudomonadati</taxon>
        <taxon>Pseudomonadota</taxon>
        <taxon>Gammaproteobacteria</taxon>
        <taxon>Alteromonadales</taxon>
        <taxon>Shewanellaceae</taxon>
        <taxon>Shewanella</taxon>
    </lineage>
</organism>
<proteinExistence type="inferred from homology"/>
<gene>
    <name evidence="1" type="primary">aroB</name>
    <name type="ordered locus">Shewana3_3893</name>
</gene>
<accession>A0L242</accession>
<sequence length="359" mass="39401">MTKQIQVDLGERSYPIYIGQSLMSDGETLSRYLLKKRILIVTNETVAPLYLKQIQDTMASFGEVTSVILPDGEQFKDLTHLDSIFTALLQRNYGRDSVLVALGGGVIGDMTGFAAACYQRGVDFIQIPTTLLSQVDSSVGGKTAVNHPLGKNMIGAFYQPQIVIIDTECLQTLPAREFAAGMAEVIKYGIMWDAEFFQWLENNVQALKSLDTQALVYAISRCCEIKADVVSQDETEQGVRALLNLGHTFGHAIEAEMGYGNWLHGEAVAAGTVLAAQTAKSMGLIDESIVRRIVQLFHAFDLPVTAPESMDFDSFIKHMRRDKKVLGGQIRLVLPTAIGRADVFSQVPESTLEQVICCA</sequence>